<gene>
    <name evidence="1" type="primary">aroE</name>
    <name type="ordered locus">LL1757</name>
    <name type="ORF">L0061</name>
</gene>
<keyword id="KW-0028">Amino-acid biosynthesis</keyword>
<keyword id="KW-0057">Aromatic amino acid biosynthesis</keyword>
<keyword id="KW-0521">NADP</keyword>
<keyword id="KW-0560">Oxidoreductase</keyword>
<keyword id="KW-1185">Reference proteome</keyword>
<name>AROE_LACLA</name>
<feature type="chain" id="PRO_0000136009" description="Shikimate dehydrogenase (NADP(+))">
    <location>
        <begin position="1"/>
        <end position="286"/>
    </location>
</feature>
<feature type="active site" description="Proton acceptor" evidence="1">
    <location>
        <position position="71"/>
    </location>
</feature>
<feature type="binding site" evidence="1">
    <location>
        <begin position="20"/>
        <end position="22"/>
    </location>
    <ligand>
        <name>shikimate</name>
        <dbReference type="ChEBI" id="CHEBI:36208"/>
    </ligand>
</feature>
<feature type="binding site" evidence="1">
    <location>
        <position position="67"/>
    </location>
    <ligand>
        <name>shikimate</name>
        <dbReference type="ChEBI" id="CHEBI:36208"/>
    </ligand>
</feature>
<feature type="binding site" evidence="1">
    <location>
        <position position="92"/>
    </location>
    <ligand>
        <name>shikimate</name>
        <dbReference type="ChEBI" id="CHEBI:36208"/>
    </ligand>
</feature>
<feature type="binding site" evidence="1">
    <location>
        <position position="107"/>
    </location>
    <ligand>
        <name>shikimate</name>
        <dbReference type="ChEBI" id="CHEBI:36208"/>
    </ligand>
</feature>
<feature type="binding site" evidence="1">
    <location>
        <begin position="131"/>
        <end position="135"/>
    </location>
    <ligand>
        <name>NADP(+)</name>
        <dbReference type="ChEBI" id="CHEBI:58349"/>
    </ligand>
</feature>
<feature type="binding site" evidence="1">
    <location>
        <position position="230"/>
    </location>
    <ligand>
        <name>NADP(+)</name>
        <dbReference type="ChEBI" id="CHEBI:58349"/>
    </ligand>
</feature>
<feature type="binding site" evidence="1">
    <location>
        <position position="232"/>
    </location>
    <ligand>
        <name>shikimate</name>
        <dbReference type="ChEBI" id="CHEBI:36208"/>
    </ligand>
</feature>
<feature type="binding site" evidence="1">
    <location>
        <position position="253"/>
    </location>
    <ligand>
        <name>NADP(+)</name>
        <dbReference type="ChEBI" id="CHEBI:58349"/>
    </ligand>
</feature>
<comment type="function">
    <text evidence="1">Involved in the biosynthesis of the chorismate, which leads to the biosynthesis of aromatic amino acids. Catalyzes the reversible NADPH linked reduction of 3-dehydroshikimate (DHSA) to yield shikimate (SA).</text>
</comment>
<comment type="catalytic activity">
    <reaction evidence="1">
        <text>shikimate + NADP(+) = 3-dehydroshikimate + NADPH + H(+)</text>
        <dbReference type="Rhea" id="RHEA:17737"/>
        <dbReference type="ChEBI" id="CHEBI:15378"/>
        <dbReference type="ChEBI" id="CHEBI:16630"/>
        <dbReference type="ChEBI" id="CHEBI:36208"/>
        <dbReference type="ChEBI" id="CHEBI:57783"/>
        <dbReference type="ChEBI" id="CHEBI:58349"/>
        <dbReference type="EC" id="1.1.1.25"/>
    </reaction>
</comment>
<comment type="pathway">
    <text evidence="1">Metabolic intermediate biosynthesis; chorismate biosynthesis; chorismate from D-erythrose 4-phosphate and phosphoenolpyruvate: step 4/7.</text>
</comment>
<comment type="subunit">
    <text evidence="1">Homodimer.</text>
</comment>
<comment type="similarity">
    <text evidence="1">Belongs to the shikimate dehydrogenase family.</text>
</comment>
<evidence type="ECO:0000255" key="1">
    <source>
        <dbReference type="HAMAP-Rule" id="MF_00222"/>
    </source>
</evidence>
<organism>
    <name type="scientific">Lactococcus lactis subsp. lactis (strain IL1403)</name>
    <name type="common">Streptococcus lactis</name>
    <dbReference type="NCBI Taxonomy" id="272623"/>
    <lineage>
        <taxon>Bacteria</taxon>
        <taxon>Bacillati</taxon>
        <taxon>Bacillota</taxon>
        <taxon>Bacilli</taxon>
        <taxon>Lactobacillales</taxon>
        <taxon>Streptococcaceae</taxon>
        <taxon>Lactococcus</taxon>
    </lineage>
</organism>
<reference key="1">
    <citation type="journal article" date="2001" name="Genome Res.">
        <title>The complete genome sequence of the lactic acid bacterium Lactococcus lactis ssp. lactis IL1403.</title>
        <authorList>
            <person name="Bolotin A."/>
            <person name="Wincker P."/>
            <person name="Mauger S."/>
            <person name="Jaillon O."/>
            <person name="Malarme K."/>
            <person name="Weissenbach J."/>
            <person name="Ehrlich S.D."/>
            <person name="Sorokin A."/>
        </authorList>
    </citation>
    <scope>NUCLEOTIDE SEQUENCE [LARGE SCALE GENOMIC DNA]</scope>
    <source>
        <strain>IL1403</strain>
    </source>
</reference>
<proteinExistence type="inferred from homology"/>
<protein>
    <recommendedName>
        <fullName evidence="1">Shikimate dehydrogenase (NADP(+))</fullName>
        <shortName evidence="1">SDH</shortName>
        <ecNumber evidence="1">1.1.1.25</ecNumber>
    </recommendedName>
</protein>
<accession>Q9CES7</accession>
<dbReference type="EC" id="1.1.1.25" evidence="1"/>
<dbReference type="EMBL" id="AE005176">
    <property type="protein sequence ID" value="AAK05855.1"/>
    <property type="molecule type" value="Genomic_DNA"/>
</dbReference>
<dbReference type="PIR" id="E86844">
    <property type="entry name" value="E86844"/>
</dbReference>
<dbReference type="RefSeq" id="NP_267913.1">
    <property type="nucleotide sequence ID" value="NC_002662.1"/>
</dbReference>
<dbReference type="RefSeq" id="WP_010906122.1">
    <property type="nucleotide sequence ID" value="NC_002662.1"/>
</dbReference>
<dbReference type="SMR" id="Q9CES7"/>
<dbReference type="PaxDb" id="272623-L0061"/>
<dbReference type="EnsemblBacteria" id="AAK05855">
    <property type="protein sequence ID" value="AAK05855"/>
    <property type="gene ID" value="L0061"/>
</dbReference>
<dbReference type="KEGG" id="lla:L0061"/>
<dbReference type="PATRIC" id="fig|272623.7.peg.1883"/>
<dbReference type="eggNOG" id="COG0169">
    <property type="taxonomic scope" value="Bacteria"/>
</dbReference>
<dbReference type="HOGENOM" id="CLU_044063_4_4_9"/>
<dbReference type="OrthoDB" id="9792692at2"/>
<dbReference type="UniPathway" id="UPA00053">
    <property type="reaction ID" value="UER00087"/>
</dbReference>
<dbReference type="Proteomes" id="UP000002196">
    <property type="component" value="Chromosome"/>
</dbReference>
<dbReference type="GO" id="GO:0050661">
    <property type="term" value="F:NADP binding"/>
    <property type="evidence" value="ECO:0007669"/>
    <property type="project" value="InterPro"/>
</dbReference>
<dbReference type="GO" id="GO:0004764">
    <property type="term" value="F:shikimate 3-dehydrogenase (NADP+) activity"/>
    <property type="evidence" value="ECO:0007669"/>
    <property type="project" value="UniProtKB-UniRule"/>
</dbReference>
<dbReference type="GO" id="GO:0008652">
    <property type="term" value="P:amino acid biosynthetic process"/>
    <property type="evidence" value="ECO:0007669"/>
    <property type="project" value="UniProtKB-KW"/>
</dbReference>
<dbReference type="GO" id="GO:0009073">
    <property type="term" value="P:aromatic amino acid family biosynthetic process"/>
    <property type="evidence" value="ECO:0007669"/>
    <property type="project" value="UniProtKB-KW"/>
</dbReference>
<dbReference type="GO" id="GO:0009423">
    <property type="term" value="P:chorismate biosynthetic process"/>
    <property type="evidence" value="ECO:0007669"/>
    <property type="project" value="UniProtKB-UniRule"/>
</dbReference>
<dbReference type="GO" id="GO:0019632">
    <property type="term" value="P:shikimate metabolic process"/>
    <property type="evidence" value="ECO:0007669"/>
    <property type="project" value="InterPro"/>
</dbReference>
<dbReference type="CDD" id="cd01065">
    <property type="entry name" value="NAD_bind_Shikimate_DH"/>
    <property type="match status" value="1"/>
</dbReference>
<dbReference type="Gene3D" id="3.40.50.10860">
    <property type="entry name" value="Leucine Dehydrogenase, chain A, domain 1"/>
    <property type="match status" value="1"/>
</dbReference>
<dbReference type="Gene3D" id="3.40.50.720">
    <property type="entry name" value="NAD(P)-binding Rossmann-like Domain"/>
    <property type="match status" value="1"/>
</dbReference>
<dbReference type="HAMAP" id="MF_00222">
    <property type="entry name" value="Shikimate_DH_AroE"/>
    <property type="match status" value="1"/>
</dbReference>
<dbReference type="InterPro" id="IPR046346">
    <property type="entry name" value="Aminoacid_DH-like_N_sf"/>
</dbReference>
<dbReference type="InterPro" id="IPR036291">
    <property type="entry name" value="NAD(P)-bd_dom_sf"/>
</dbReference>
<dbReference type="InterPro" id="IPR041121">
    <property type="entry name" value="SDH_C"/>
</dbReference>
<dbReference type="InterPro" id="IPR011342">
    <property type="entry name" value="Shikimate_DH"/>
</dbReference>
<dbReference type="InterPro" id="IPR013708">
    <property type="entry name" value="Shikimate_DH-bd_N"/>
</dbReference>
<dbReference type="InterPro" id="IPR022893">
    <property type="entry name" value="Shikimate_DH_fam"/>
</dbReference>
<dbReference type="NCBIfam" id="TIGR00507">
    <property type="entry name" value="aroE"/>
    <property type="match status" value="1"/>
</dbReference>
<dbReference type="NCBIfam" id="NF001315">
    <property type="entry name" value="PRK00258.2-4"/>
    <property type="match status" value="1"/>
</dbReference>
<dbReference type="PANTHER" id="PTHR21089:SF1">
    <property type="entry name" value="BIFUNCTIONAL 3-DEHYDROQUINATE DEHYDRATASE_SHIKIMATE DEHYDROGENASE, CHLOROPLASTIC"/>
    <property type="match status" value="1"/>
</dbReference>
<dbReference type="PANTHER" id="PTHR21089">
    <property type="entry name" value="SHIKIMATE DEHYDROGENASE"/>
    <property type="match status" value="1"/>
</dbReference>
<dbReference type="Pfam" id="PF18317">
    <property type="entry name" value="SDH_C"/>
    <property type="match status" value="1"/>
</dbReference>
<dbReference type="Pfam" id="PF08501">
    <property type="entry name" value="Shikimate_dh_N"/>
    <property type="match status" value="1"/>
</dbReference>
<dbReference type="SUPFAM" id="SSF53223">
    <property type="entry name" value="Aminoacid dehydrogenase-like, N-terminal domain"/>
    <property type="match status" value="1"/>
</dbReference>
<dbReference type="SUPFAM" id="SSF51735">
    <property type="entry name" value="NAD(P)-binding Rossmann-fold domains"/>
    <property type="match status" value="1"/>
</dbReference>
<sequence>MNINGYTRMAAVVANPIKHSLSPFIHNLAFDLTNENGVYLAWEVEAEKLPAIVDNVRTLDMYGLNISMPYKTEITPFMDELSPAAELIGAVNTVVNQSGKLIGHNTDGIGFFNSLEKYHFNIQNKQMLILGGGGAAIAIIAQAALSGAKKIVVAARKSASYIPLKEKLEKLSVKTGIEILLTDLSEADRLQKELKQTDLLVNATSVGMDGESLPLEKSLVLPEKLLVVDAIYKVRETPFLRWAKGQGAQTENGLGMLIGQAAESFYLWTGKKMPVAEITLEMEKEA</sequence>